<name>RL2_CHLSY</name>
<organism>
    <name type="scientific">Chloroflexus aurantiacus (strain ATCC 29364 / DSM 637 / Y-400-fl)</name>
    <dbReference type="NCBI Taxonomy" id="480224"/>
    <lineage>
        <taxon>Bacteria</taxon>
        <taxon>Bacillati</taxon>
        <taxon>Chloroflexota</taxon>
        <taxon>Chloroflexia</taxon>
        <taxon>Chloroflexales</taxon>
        <taxon>Chloroflexineae</taxon>
        <taxon>Chloroflexaceae</taxon>
        <taxon>Chloroflexus</taxon>
    </lineage>
</organism>
<evidence type="ECO:0000255" key="1">
    <source>
        <dbReference type="HAMAP-Rule" id="MF_01320"/>
    </source>
</evidence>
<evidence type="ECO:0000256" key="2">
    <source>
        <dbReference type="SAM" id="MobiDB-lite"/>
    </source>
</evidence>
<evidence type="ECO:0000305" key="3"/>
<accession>B9LJD5</accession>
<dbReference type="EMBL" id="CP001364">
    <property type="protein sequence ID" value="ACM53951.1"/>
    <property type="molecule type" value="Genomic_DNA"/>
</dbReference>
<dbReference type="SMR" id="B9LJD5"/>
<dbReference type="KEGG" id="chl:Chy400_2559"/>
<dbReference type="HOGENOM" id="CLU_036235_2_1_0"/>
<dbReference type="OrthoDB" id="9778722at2"/>
<dbReference type="GO" id="GO:0015934">
    <property type="term" value="C:large ribosomal subunit"/>
    <property type="evidence" value="ECO:0007669"/>
    <property type="project" value="InterPro"/>
</dbReference>
<dbReference type="GO" id="GO:0019843">
    <property type="term" value="F:rRNA binding"/>
    <property type="evidence" value="ECO:0007669"/>
    <property type="project" value="UniProtKB-UniRule"/>
</dbReference>
<dbReference type="GO" id="GO:0003735">
    <property type="term" value="F:structural constituent of ribosome"/>
    <property type="evidence" value="ECO:0007669"/>
    <property type="project" value="InterPro"/>
</dbReference>
<dbReference type="GO" id="GO:0016740">
    <property type="term" value="F:transferase activity"/>
    <property type="evidence" value="ECO:0007669"/>
    <property type="project" value="InterPro"/>
</dbReference>
<dbReference type="GO" id="GO:0002181">
    <property type="term" value="P:cytoplasmic translation"/>
    <property type="evidence" value="ECO:0007669"/>
    <property type="project" value="TreeGrafter"/>
</dbReference>
<dbReference type="FunFam" id="2.30.30.30:FF:000001">
    <property type="entry name" value="50S ribosomal protein L2"/>
    <property type="match status" value="1"/>
</dbReference>
<dbReference type="FunFam" id="2.40.50.140:FF:000003">
    <property type="entry name" value="50S ribosomal protein L2"/>
    <property type="match status" value="1"/>
</dbReference>
<dbReference type="FunFam" id="4.10.950.10:FF:000001">
    <property type="entry name" value="50S ribosomal protein L2"/>
    <property type="match status" value="1"/>
</dbReference>
<dbReference type="Gene3D" id="2.30.30.30">
    <property type="match status" value="1"/>
</dbReference>
<dbReference type="Gene3D" id="2.40.50.140">
    <property type="entry name" value="Nucleic acid-binding proteins"/>
    <property type="match status" value="1"/>
</dbReference>
<dbReference type="Gene3D" id="4.10.950.10">
    <property type="entry name" value="Ribosomal protein L2, domain 3"/>
    <property type="match status" value="1"/>
</dbReference>
<dbReference type="HAMAP" id="MF_01320_B">
    <property type="entry name" value="Ribosomal_uL2_B"/>
    <property type="match status" value="1"/>
</dbReference>
<dbReference type="InterPro" id="IPR012340">
    <property type="entry name" value="NA-bd_OB-fold"/>
</dbReference>
<dbReference type="InterPro" id="IPR014722">
    <property type="entry name" value="Rib_uL2_dom2"/>
</dbReference>
<dbReference type="InterPro" id="IPR002171">
    <property type="entry name" value="Ribosomal_uL2"/>
</dbReference>
<dbReference type="InterPro" id="IPR005880">
    <property type="entry name" value="Ribosomal_uL2_bac/org-type"/>
</dbReference>
<dbReference type="InterPro" id="IPR022669">
    <property type="entry name" value="Ribosomal_uL2_C"/>
</dbReference>
<dbReference type="InterPro" id="IPR022671">
    <property type="entry name" value="Ribosomal_uL2_CS"/>
</dbReference>
<dbReference type="InterPro" id="IPR014726">
    <property type="entry name" value="Ribosomal_uL2_dom3"/>
</dbReference>
<dbReference type="InterPro" id="IPR022666">
    <property type="entry name" value="Ribosomal_uL2_RNA-bd_dom"/>
</dbReference>
<dbReference type="InterPro" id="IPR008991">
    <property type="entry name" value="Translation_prot_SH3-like_sf"/>
</dbReference>
<dbReference type="NCBIfam" id="TIGR01171">
    <property type="entry name" value="rplB_bact"/>
    <property type="match status" value="1"/>
</dbReference>
<dbReference type="PANTHER" id="PTHR13691:SF5">
    <property type="entry name" value="LARGE RIBOSOMAL SUBUNIT PROTEIN UL2M"/>
    <property type="match status" value="1"/>
</dbReference>
<dbReference type="PANTHER" id="PTHR13691">
    <property type="entry name" value="RIBOSOMAL PROTEIN L2"/>
    <property type="match status" value="1"/>
</dbReference>
<dbReference type="Pfam" id="PF00181">
    <property type="entry name" value="Ribosomal_L2"/>
    <property type="match status" value="1"/>
</dbReference>
<dbReference type="Pfam" id="PF03947">
    <property type="entry name" value="Ribosomal_L2_C"/>
    <property type="match status" value="1"/>
</dbReference>
<dbReference type="PIRSF" id="PIRSF002158">
    <property type="entry name" value="Ribosomal_L2"/>
    <property type="match status" value="1"/>
</dbReference>
<dbReference type="SMART" id="SM01383">
    <property type="entry name" value="Ribosomal_L2"/>
    <property type="match status" value="1"/>
</dbReference>
<dbReference type="SMART" id="SM01382">
    <property type="entry name" value="Ribosomal_L2_C"/>
    <property type="match status" value="1"/>
</dbReference>
<dbReference type="SUPFAM" id="SSF50249">
    <property type="entry name" value="Nucleic acid-binding proteins"/>
    <property type="match status" value="1"/>
</dbReference>
<dbReference type="SUPFAM" id="SSF50104">
    <property type="entry name" value="Translation proteins SH3-like domain"/>
    <property type="match status" value="1"/>
</dbReference>
<dbReference type="PROSITE" id="PS00467">
    <property type="entry name" value="RIBOSOMAL_L2"/>
    <property type="match status" value="1"/>
</dbReference>
<sequence length="274" mass="30555">MGVRIYKPTSAGRRNMSVSTFEEITKKEPEPRLIEPLRKKAGRNNQGRITVRHRGGGHKRFYRIIDFKRNKFGVPAKVQAIEYDPNRTARIALLAYADGEKRYIIAPLGLKVGDTVMSGPDAEIRVGNALPLSAIPLGTQIHNIELEIGRGGVLVRSAGTAAQLMAKEGDYAIVRMPSGEMRMIHLRCMATIGQVGNVDHQNIRLGKAGRSRWLGRRPRVRGAAMNPRDHPHGGGEGRAPRGMSTPKTKWGKPARGVKTRHNPRFDRFIVRRRK</sequence>
<feature type="chain" id="PRO_1000165732" description="Large ribosomal subunit protein uL2">
    <location>
        <begin position="1"/>
        <end position="274"/>
    </location>
</feature>
<feature type="region of interest" description="Disordered" evidence="2">
    <location>
        <begin position="220"/>
        <end position="265"/>
    </location>
</feature>
<feature type="compositionally biased region" description="Basic and acidic residues" evidence="2">
    <location>
        <begin position="227"/>
        <end position="239"/>
    </location>
</feature>
<feature type="compositionally biased region" description="Basic residues" evidence="2">
    <location>
        <begin position="249"/>
        <end position="262"/>
    </location>
</feature>
<proteinExistence type="inferred from homology"/>
<protein>
    <recommendedName>
        <fullName evidence="1">Large ribosomal subunit protein uL2</fullName>
    </recommendedName>
    <alternativeName>
        <fullName evidence="3">50S ribosomal protein L2</fullName>
    </alternativeName>
</protein>
<comment type="function">
    <text evidence="1">One of the primary rRNA binding proteins. Required for association of the 30S and 50S subunits to form the 70S ribosome, for tRNA binding and peptide bond formation. It has been suggested to have peptidyltransferase activity; this is somewhat controversial. Makes several contacts with the 16S rRNA in the 70S ribosome.</text>
</comment>
<comment type="subunit">
    <text evidence="1">Part of the 50S ribosomal subunit. Forms a bridge to the 30S subunit in the 70S ribosome.</text>
</comment>
<comment type="similarity">
    <text evidence="1">Belongs to the universal ribosomal protein uL2 family.</text>
</comment>
<keyword id="KW-0687">Ribonucleoprotein</keyword>
<keyword id="KW-0689">Ribosomal protein</keyword>
<keyword id="KW-0694">RNA-binding</keyword>
<keyword id="KW-0699">rRNA-binding</keyword>
<gene>
    <name evidence="1" type="primary">rplB</name>
    <name type="ordered locus">Chy400_2559</name>
</gene>
<reference key="1">
    <citation type="submission" date="2009-01" db="EMBL/GenBank/DDBJ databases">
        <title>Complete sequence of Chloroflexus sp. Y-400-fl.</title>
        <authorList>
            <consortium name="US DOE Joint Genome Institute"/>
            <person name="Lucas S."/>
            <person name="Copeland A."/>
            <person name="Lapidus A."/>
            <person name="Glavina del Rio T."/>
            <person name="Dalin E."/>
            <person name="Tice H."/>
            <person name="Bruce D."/>
            <person name="Goodwin L."/>
            <person name="Pitluck S."/>
            <person name="Sims D."/>
            <person name="Kiss H."/>
            <person name="Brettin T."/>
            <person name="Detter J.C."/>
            <person name="Han C."/>
            <person name="Larimer F."/>
            <person name="Land M."/>
            <person name="Hauser L."/>
            <person name="Kyrpides N."/>
            <person name="Ovchinnikova G."/>
            <person name="Bryant D.A."/>
            <person name="Richardson P."/>
        </authorList>
    </citation>
    <scope>NUCLEOTIDE SEQUENCE [LARGE SCALE GENOMIC DNA]</scope>
    <source>
        <strain>ATCC 29364 / DSM 637 / Y-400-fl</strain>
    </source>
</reference>